<organism>
    <name type="scientific">Streptomyces coelicolor (strain ATCC BAA-471 / A3(2) / M145)</name>
    <dbReference type="NCBI Taxonomy" id="100226"/>
    <lineage>
        <taxon>Bacteria</taxon>
        <taxon>Bacillati</taxon>
        <taxon>Actinomycetota</taxon>
        <taxon>Actinomycetes</taxon>
        <taxon>Kitasatosporales</taxon>
        <taxon>Streptomycetaceae</taxon>
        <taxon>Streptomyces</taxon>
        <taxon>Streptomyces albidoflavus group</taxon>
    </lineage>
</organism>
<evidence type="ECO:0000305" key="1"/>
<sequence length="455" mass="48601">MAISVFDLFSIGIGPSSSHTVGPMRAARMFARRLRNEELLDSVASVRVELYGSLGATGHGHGTPKAVLLGLEGDSPRTVDVESADDRVETIKSSGRISLLGDHEIAFAYDDDMVLHRRKALPYHANGMTLWAYDAEGAEVLTKTYYSVGGGFVVDEDAVGADRIVLDDTVLKYPFRTGDELLRLARETGLSISALMLENERAWRDEDEIREGLLEIWRVMRACVDRGMTREGILPGGLKVRRRAANTARKLRSEGDPQALAMEWITLYAMAVNEENAAGGRVVTAPTNGAAGIIPAVLHYYMNFVPGADEDGVVRFLLAAGAIGMLFKENASISGAEVGCQGEVGSACSMAAGALAEVLGGSPEQVENAAEIGMEHNLGLTCDPVGGLVQIPCIERNGMAAVKAVTAARMAMRGDGSHKVSLDKVIKTMKETGADMSVKYKETARGGLAVNIIEC</sequence>
<feature type="chain" id="PRO_0000171911" description="L-serine dehydratase">
    <location>
        <begin position="1"/>
        <end position="455"/>
    </location>
</feature>
<keyword id="KW-0004">4Fe-4S</keyword>
<keyword id="KW-0312">Gluconeogenesis</keyword>
<keyword id="KW-0408">Iron</keyword>
<keyword id="KW-0411">Iron-sulfur</keyword>
<keyword id="KW-0456">Lyase</keyword>
<keyword id="KW-0479">Metal-binding</keyword>
<keyword id="KW-1185">Reference proteome</keyword>
<reference key="1">
    <citation type="journal article" date="2002" name="Nature">
        <title>Complete genome sequence of the model actinomycete Streptomyces coelicolor A3(2).</title>
        <authorList>
            <person name="Bentley S.D."/>
            <person name="Chater K.F."/>
            <person name="Cerdeno-Tarraga A.-M."/>
            <person name="Challis G.L."/>
            <person name="Thomson N.R."/>
            <person name="James K.D."/>
            <person name="Harris D.E."/>
            <person name="Quail M.A."/>
            <person name="Kieser H."/>
            <person name="Harper D."/>
            <person name="Bateman A."/>
            <person name="Brown S."/>
            <person name="Chandra G."/>
            <person name="Chen C.W."/>
            <person name="Collins M."/>
            <person name="Cronin A."/>
            <person name="Fraser A."/>
            <person name="Goble A."/>
            <person name="Hidalgo J."/>
            <person name="Hornsby T."/>
            <person name="Howarth S."/>
            <person name="Huang C.-H."/>
            <person name="Kieser T."/>
            <person name="Larke L."/>
            <person name="Murphy L.D."/>
            <person name="Oliver K."/>
            <person name="O'Neil S."/>
            <person name="Rabbinowitsch E."/>
            <person name="Rajandream M.A."/>
            <person name="Rutherford K.M."/>
            <person name="Rutter S."/>
            <person name="Seeger K."/>
            <person name="Saunders D."/>
            <person name="Sharp S."/>
            <person name="Squares R."/>
            <person name="Squares S."/>
            <person name="Taylor K."/>
            <person name="Warren T."/>
            <person name="Wietzorrek A."/>
            <person name="Woodward J.R."/>
            <person name="Barrell B.G."/>
            <person name="Parkhill J."/>
            <person name="Hopwood D.A."/>
        </authorList>
    </citation>
    <scope>NUCLEOTIDE SEQUENCE [LARGE SCALE GENOMIC DNA]</scope>
    <source>
        <strain>ATCC BAA-471 / A3(2) / M145</strain>
    </source>
</reference>
<proteinExistence type="inferred from homology"/>
<comment type="catalytic activity">
    <reaction>
        <text>L-serine = pyruvate + NH4(+)</text>
        <dbReference type="Rhea" id="RHEA:19169"/>
        <dbReference type="ChEBI" id="CHEBI:15361"/>
        <dbReference type="ChEBI" id="CHEBI:28938"/>
        <dbReference type="ChEBI" id="CHEBI:33384"/>
        <dbReference type="EC" id="4.3.1.17"/>
    </reaction>
</comment>
<comment type="cofactor">
    <cofactor evidence="1">
        <name>[4Fe-4S] cluster</name>
        <dbReference type="ChEBI" id="CHEBI:49883"/>
    </cofactor>
    <text evidence="1">Binds 1 [4Fe-4S] cluster.</text>
</comment>
<comment type="pathway">
    <text>Carbohydrate biosynthesis; gluconeogenesis.</text>
</comment>
<comment type="similarity">
    <text evidence="1">Belongs to the iron-sulfur dependent L-serine dehydratase family.</text>
</comment>
<name>SDHL_STRCO</name>
<protein>
    <recommendedName>
        <fullName>L-serine dehydratase</fullName>
        <shortName>SDH</shortName>
        <ecNumber>4.3.1.17</ecNumber>
    </recommendedName>
    <alternativeName>
        <fullName>L-serine deaminase</fullName>
        <shortName>L-SD</shortName>
    </alternativeName>
</protein>
<gene>
    <name type="primary">sdaA</name>
    <name type="ordered locus">SCO5469</name>
    <name type="ORF">SC2A11.03c</name>
</gene>
<dbReference type="EC" id="4.3.1.17"/>
<dbReference type="EMBL" id="AL939123">
    <property type="protein sequence ID" value="CAA20172.1"/>
    <property type="molecule type" value="Genomic_DNA"/>
</dbReference>
<dbReference type="PIR" id="T34749">
    <property type="entry name" value="T34749"/>
</dbReference>
<dbReference type="RefSeq" id="NP_629605.1">
    <property type="nucleotide sequence ID" value="NC_003888.3"/>
</dbReference>
<dbReference type="RefSeq" id="WP_011030269.1">
    <property type="nucleotide sequence ID" value="NZ_VNID01000011.1"/>
</dbReference>
<dbReference type="SMR" id="O86564"/>
<dbReference type="FunCoup" id="O86564">
    <property type="interactions" value="184"/>
</dbReference>
<dbReference type="STRING" id="100226.gene:17763121"/>
<dbReference type="PaxDb" id="100226-SCO5469"/>
<dbReference type="KEGG" id="sco:SCO5469"/>
<dbReference type="PATRIC" id="fig|100226.15.peg.5553"/>
<dbReference type="eggNOG" id="COG1760">
    <property type="taxonomic scope" value="Bacteria"/>
</dbReference>
<dbReference type="HOGENOM" id="CLU_022305_0_1_11"/>
<dbReference type="InParanoid" id="O86564"/>
<dbReference type="OrthoDB" id="9805537at2"/>
<dbReference type="PhylomeDB" id="O86564"/>
<dbReference type="UniPathway" id="UPA00138"/>
<dbReference type="Proteomes" id="UP000001973">
    <property type="component" value="Chromosome"/>
</dbReference>
<dbReference type="GO" id="GO:0051539">
    <property type="term" value="F:4 iron, 4 sulfur cluster binding"/>
    <property type="evidence" value="ECO:0007669"/>
    <property type="project" value="UniProtKB-KW"/>
</dbReference>
<dbReference type="GO" id="GO:0003941">
    <property type="term" value="F:L-serine ammonia-lyase activity"/>
    <property type="evidence" value="ECO:0000318"/>
    <property type="project" value="GO_Central"/>
</dbReference>
<dbReference type="GO" id="GO:0046872">
    <property type="term" value="F:metal ion binding"/>
    <property type="evidence" value="ECO:0007669"/>
    <property type="project" value="UniProtKB-KW"/>
</dbReference>
<dbReference type="GO" id="GO:0006094">
    <property type="term" value="P:gluconeogenesis"/>
    <property type="evidence" value="ECO:0007669"/>
    <property type="project" value="UniProtKB-UniPathway"/>
</dbReference>
<dbReference type="FunFam" id="3.30.1330.90:FF:000001">
    <property type="entry name" value="L-serine ammonia-lyase 1"/>
    <property type="match status" value="1"/>
</dbReference>
<dbReference type="Gene3D" id="3.30.1330.90">
    <property type="entry name" value="D-3-phosphoglycerate dehydrogenase, domain 3"/>
    <property type="match status" value="1"/>
</dbReference>
<dbReference type="InterPro" id="IPR029009">
    <property type="entry name" value="ASB_dom_sf"/>
</dbReference>
<dbReference type="InterPro" id="IPR051318">
    <property type="entry name" value="Fe-S_L-Ser"/>
</dbReference>
<dbReference type="InterPro" id="IPR004644">
    <property type="entry name" value="Fe-S_L-Ser_mono"/>
</dbReference>
<dbReference type="InterPro" id="IPR005130">
    <property type="entry name" value="Ser_deHydtase-like_asu"/>
</dbReference>
<dbReference type="InterPro" id="IPR005131">
    <property type="entry name" value="Ser_deHydtase_bsu"/>
</dbReference>
<dbReference type="NCBIfam" id="TIGR00720">
    <property type="entry name" value="sda_mono"/>
    <property type="match status" value="1"/>
</dbReference>
<dbReference type="PANTHER" id="PTHR30182">
    <property type="entry name" value="L-SERINE DEHYDRATASE"/>
    <property type="match status" value="1"/>
</dbReference>
<dbReference type="PANTHER" id="PTHR30182:SF1">
    <property type="entry name" value="L-SERINE DEHYDRATASE 1"/>
    <property type="match status" value="1"/>
</dbReference>
<dbReference type="Pfam" id="PF03313">
    <property type="entry name" value="SDH_alpha"/>
    <property type="match status" value="1"/>
</dbReference>
<dbReference type="Pfam" id="PF03315">
    <property type="entry name" value="SDH_beta"/>
    <property type="match status" value="1"/>
</dbReference>
<dbReference type="SUPFAM" id="SSF143548">
    <property type="entry name" value="Serine metabolism enzymes domain"/>
    <property type="match status" value="1"/>
</dbReference>
<accession>O86564</accession>